<name>ARRD3_PONAB</name>
<accession>Q5R5L7</accession>
<evidence type="ECO:0000250" key="1">
    <source>
        <dbReference type="UniProtKB" id="Q96B67"/>
    </source>
</evidence>
<evidence type="ECO:0000256" key="2">
    <source>
        <dbReference type="SAM" id="MobiDB-lite"/>
    </source>
</evidence>
<evidence type="ECO:0000305" key="3"/>
<gene>
    <name type="primary">ARRDC3</name>
</gene>
<dbReference type="EMBL" id="CR860840">
    <property type="protein sequence ID" value="CAH92949.1"/>
    <property type="molecule type" value="mRNA"/>
</dbReference>
<dbReference type="RefSeq" id="NP_001127608.1">
    <property type="nucleotide sequence ID" value="NM_001134136.1"/>
</dbReference>
<dbReference type="SMR" id="Q5R5L7"/>
<dbReference type="FunCoup" id="Q5R5L7">
    <property type="interactions" value="1105"/>
</dbReference>
<dbReference type="STRING" id="9601.ENSPPYP00000017472"/>
<dbReference type="GeneID" id="100174687"/>
<dbReference type="KEGG" id="pon:100174687"/>
<dbReference type="CTD" id="57561"/>
<dbReference type="eggNOG" id="KOG3780">
    <property type="taxonomic scope" value="Eukaryota"/>
</dbReference>
<dbReference type="InParanoid" id="Q5R5L7"/>
<dbReference type="OrthoDB" id="2333384at2759"/>
<dbReference type="Proteomes" id="UP000001595">
    <property type="component" value="Unplaced"/>
</dbReference>
<dbReference type="GO" id="GO:0005769">
    <property type="term" value="C:early endosome"/>
    <property type="evidence" value="ECO:0007669"/>
    <property type="project" value="UniProtKB-SubCell"/>
</dbReference>
<dbReference type="GO" id="GO:0005764">
    <property type="term" value="C:lysosome"/>
    <property type="evidence" value="ECO:0007669"/>
    <property type="project" value="UniProtKB-SubCell"/>
</dbReference>
<dbReference type="GO" id="GO:0005886">
    <property type="term" value="C:plasma membrane"/>
    <property type="evidence" value="ECO:0007669"/>
    <property type="project" value="UniProtKB-SubCell"/>
</dbReference>
<dbReference type="GO" id="GO:0015031">
    <property type="term" value="P:protein transport"/>
    <property type="evidence" value="ECO:0007669"/>
    <property type="project" value="TreeGrafter"/>
</dbReference>
<dbReference type="FunFam" id="2.60.40.640:FF:000005">
    <property type="entry name" value="Arrestin domain-containing protein 3"/>
    <property type="match status" value="1"/>
</dbReference>
<dbReference type="FunFam" id="2.60.40.640:FF:000007">
    <property type="entry name" value="Arrestin domain-containing protein 3 mRNA"/>
    <property type="match status" value="1"/>
</dbReference>
<dbReference type="Gene3D" id="2.60.40.640">
    <property type="match status" value="2"/>
</dbReference>
<dbReference type="InterPro" id="IPR014752">
    <property type="entry name" value="Arrestin-like_C"/>
</dbReference>
<dbReference type="InterPro" id="IPR011021">
    <property type="entry name" value="Arrestin-like_N"/>
</dbReference>
<dbReference type="InterPro" id="IPR011022">
    <property type="entry name" value="Arrestin_C-like"/>
</dbReference>
<dbReference type="InterPro" id="IPR050357">
    <property type="entry name" value="Arrestin_domain-protein"/>
</dbReference>
<dbReference type="InterPro" id="IPR014756">
    <property type="entry name" value="Ig_E-set"/>
</dbReference>
<dbReference type="PANTHER" id="PTHR11188">
    <property type="entry name" value="ARRESTIN DOMAIN CONTAINING PROTEIN"/>
    <property type="match status" value="1"/>
</dbReference>
<dbReference type="PANTHER" id="PTHR11188:SF49">
    <property type="entry name" value="ARRESTIN DOMAIN-CONTAINING PROTEIN 3"/>
    <property type="match status" value="1"/>
</dbReference>
<dbReference type="Pfam" id="PF02752">
    <property type="entry name" value="Arrestin_C"/>
    <property type="match status" value="1"/>
</dbReference>
<dbReference type="Pfam" id="PF00339">
    <property type="entry name" value="Arrestin_N"/>
    <property type="match status" value="1"/>
</dbReference>
<dbReference type="SMART" id="SM01017">
    <property type="entry name" value="Arrestin_C"/>
    <property type="match status" value="1"/>
</dbReference>
<dbReference type="SUPFAM" id="SSF81296">
    <property type="entry name" value="E set domains"/>
    <property type="match status" value="2"/>
</dbReference>
<proteinExistence type="evidence at transcript level"/>
<sequence length="414" mass="46411">MVLGKVKSLTISFDCLNDSNVPVYSSGDTVSGRVNLEVTGEIRVKSLKIHARGHAKVRWTESRNAGSNTAYTQNYTEEVEYFNHKDILIGHERDDDNSEEGFHTIHSGRHEYAFSFELPQTPLATSFEGRHGSVRYWVKAELHRPWLLPVKLKKEFTVFEHIDINTPSLLSPQAGTKEKTLCCWFCTSGPISLSAKIERKGYTPGESIQIYAEIENCSSRMVVPKAAIYQTQAFYAKGKMKEVKQLVANLRGESLSSGKTETWNGKLLKIPPVSPSILDCSIIRVEYSLMVYVDIPGAMDLFLNLPLVIGTIPLHPFGSRTSSVSSQCSMNMNWLSLSLPERPEAPPSYAEVVTEEQRRNNLAPVSACDDFERALQGPLFAYIQEFRFLPPPLYSEIDPNPDQSADDRPSCPSR</sequence>
<reference key="1">
    <citation type="submission" date="2004-11" db="EMBL/GenBank/DDBJ databases">
        <authorList>
            <consortium name="The German cDNA consortium"/>
        </authorList>
    </citation>
    <scope>NUCLEOTIDE SEQUENCE [LARGE SCALE MRNA]</scope>
    <source>
        <tissue>Kidney</tissue>
    </source>
</reference>
<feature type="chain" id="PRO_0000244351" description="Arrestin domain-containing protein 3">
    <location>
        <begin position="1"/>
        <end position="414"/>
    </location>
</feature>
<feature type="region of interest" description="Disordered" evidence="2">
    <location>
        <begin position="393"/>
        <end position="414"/>
    </location>
</feature>
<feature type="short sequence motif" description="PPxY motif 1" evidence="3">
    <location>
        <begin position="346"/>
        <end position="349"/>
    </location>
</feature>
<feature type="short sequence motif" description="PPxY motif 2" evidence="3">
    <location>
        <begin position="391"/>
        <end position="394"/>
    </location>
</feature>
<feature type="compositionally biased region" description="Basic and acidic residues" evidence="2">
    <location>
        <begin position="405"/>
        <end position="414"/>
    </location>
</feature>
<comment type="function">
    <text evidence="1">Adapter protein that plays a role in regulating cell-surface expression of adrenergic receptors and probably also other G protein-coupled receptors. Plays a role in NEDD4-mediated ubiquitination and endocytosis af activated ADRB2 and subsequent ADRB2 degradation. May recruit NEDD4 to ADRB2. Alternatively, may function as adapter protein that does not play a major role in recruiting NEDD4 to ADRB2, but rather plays a role in a targeting ADRB2 to endosomes.</text>
</comment>
<comment type="subunit">
    <text evidence="1">Interacts (via PPxY motifs) with NEDD4 (via WW domains). Interacts with ADRB2. Interacts with ADRB3. Interacts with HGS (via PPxY motifs). Does not bind TXN (thioredoxin). Interacts with ITCH.</text>
</comment>
<comment type="subcellular location">
    <subcellularLocation>
        <location evidence="1">Cytoplasm</location>
    </subcellularLocation>
    <subcellularLocation>
        <location evidence="1">Cell membrane</location>
        <topology evidence="1">Peripheral membrane protein</topology>
        <orientation evidence="1">Cytoplasmic side</orientation>
    </subcellularLocation>
    <subcellularLocation>
        <location evidence="1">Lysosome</location>
    </subcellularLocation>
    <subcellularLocation>
        <location evidence="1">Endosome</location>
    </subcellularLocation>
    <subcellularLocation>
        <location evidence="1">Early endosome</location>
    </subcellularLocation>
    <text evidence="1">Associated with plasma membrane, as well as with endosomes and lysosomes during endocytosis.</text>
</comment>
<comment type="similarity">
    <text evidence="3">Belongs to the arrestin family.</text>
</comment>
<keyword id="KW-1003">Cell membrane</keyword>
<keyword id="KW-0963">Cytoplasm</keyword>
<keyword id="KW-0967">Endosome</keyword>
<keyword id="KW-0458">Lysosome</keyword>
<keyword id="KW-0472">Membrane</keyword>
<keyword id="KW-1185">Reference proteome</keyword>
<keyword id="KW-0677">Repeat</keyword>
<protein>
    <recommendedName>
        <fullName>Arrestin domain-containing protein 3</fullName>
    </recommendedName>
</protein>
<organism>
    <name type="scientific">Pongo abelii</name>
    <name type="common">Sumatran orangutan</name>
    <name type="synonym">Pongo pygmaeus abelii</name>
    <dbReference type="NCBI Taxonomy" id="9601"/>
    <lineage>
        <taxon>Eukaryota</taxon>
        <taxon>Metazoa</taxon>
        <taxon>Chordata</taxon>
        <taxon>Craniata</taxon>
        <taxon>Vertebrata</taxon>
        <taxon>Euteleostomi</taxon>
        <taxon>Mammalia</taxon>
        <taxon>Eutheria</taxon>
        <taxon>Euarchontoglires</taxon>
        <taxon>Primates</taxon>
        <taxon>Haplorrhini</taxon>
        <taxon>Catarrhini</taxon>
        <taxon>Hominidae</taxon>
        <taxon>Pongo</taxon>
    </lineage>
</organism>